<name>Y4213_ARATH</name>
<evidence type="ECO:0000255" key="1"/>
<evidence type="ECO:0000256" key="2">
    <source>
        <dbReference type="SAM" id="MobiDB-lite"/>
    </source>
</evidence>
<evidence type="ECO:0000305" key="3"/>
<dbReference type="EMBL" id="AL021636">
    <property type="protein sequence ID" value="CAA16576.1"/>
    <property type="status" value="ALT_SEQ"/>
    <property type="molecule type" value="Genomic_DNA"/>
</dbReference>
<dbReference type="EMBL" id="AL161580">
    <property type="protein sequence ID" value="CAB79931.1"/>
    <property type="status" value="ALT_SEQ"/>
    <property type="molecule type" value="Genomic_DNA"/>
</dbReference>
<dbReference type="EMBL" id="CP002687">
    <property type="protein sequence ID" value="AEE86009.1"/>
    <property type="molecule type" value="Genomic_DNA"/>
</dbReference>
<dbReference type="EMBL" id="AY072335">
    <property type="protein sequence ID" value="AAL61942.1"/>
    <property type="molecule type" value="mRNA"/>
</dbReference>
<dbReference type="EMBL" id="AY114611">
    <property type="protein sequence ID" value="AAM47930.1"/>
    <property type="molecule type" value="mRNA"/>
</dbReference>
<dbReference type="PIR" id="T04632">
    <property type="entry name" value="T04632"/>
</dbReference>
<dbReference type="RefSeq" id="NP_194940.2">
    <property type="nucleotide sequence ID" value="NM_119365.5"/>
</dbReference>
<dbReference type="SMR" id="Q8VY97"/>
<dbReference type="FunCoup" id="Q8VY97">
    <property type="interactions" value="4177"/>
</dbReference>
<dbReference type="STRING" id="3702.Q8VY97"/>
<dbReference type="PaxDb" id="3702-AT4G32130.1"/>
<dbReference type="ProteomicsDB" id="242850"/>
<dbReference type="EnsemblPlants" id="AT4G32130.1">
    <property type="protein sequence ID" value="AT4G32130.1"/>
    <property type="gene ID" value="AT4G32130"/>
</dbReference>
<dbReference type="GeneID" id="829345"/>
<dbReference type="Gramene" id="AT4G32130.1">
    <property type="protein sequence ID" value="AT4G32130.1"/>
    <property type="gene ID" value="AT4G32130"/>
</dbReference>
<dbReference type="KEGG" id="ath:AT4G32130"/>
<dbReference type="Araport" id="AT4G32130"/>
<dbReference type="TAIR" id="AT4G32130"/>
<dbReference type="eggNOG" id="KOG3306">
    <property type="taxonomic scope" value="Eukaryota"/>
</dbReference>
<dbReference type="HOGENOM" id="CLU_073620_2_0_1"/>
<dbReference type="InParanoid" id="Q8VY97"/>
<dbReference type="OMA" id="QWPADIT"/>
<dbReference type="OrthoDB" id="27095at2759"/>
<dbReference type="PhylomeDB" id="Q8VY97"/>
<dbReference type="PRO" id="PR:Q8VY97"/>
<dbReference type="Proteomes" id="UP000006548">
    <property type="component" value="Chromosome 4"/>
</dbReference>
<dbReference type="ExpressionAtlas" id="Q8VY97">
    <property type="expression patterns" value="baseline and differential"/>
</dbReference>
<dbReference type="GO" id="GO:0005783">
    <property type="term" value="C:endoplasmic reticulum"/>
    <property type="evidence" value="ECO:0007005"/>
    <property type="project" value="TAIR"/>
</dbReference>
<dbReference type="GO" id="GO:0005886">
    <property type="term" value="C:plasma membrane"/>
    <property type="evidence" value="ECO:0007005"/>
    <property type="project" value="TAIR"/>
</dbReference>
<dbReference type="GO" id="GO:0030246">
    <property type="term" value="F:carbohydrate binding"/>
    <property type="evidence" value="ECO:0007669"/>
    <property type="project" value="InterPro"/>
</dbReference>
<dbReference type="InterPro" id="IPR013784">
    <property type="entry name" value="Carb-bd-like_fold"/>
</dbReference>
<dbReference type="InterPro" id="IPR039163">
    <property type="entry name" value="EMC7"/>
</dbReference>
<dbReference type="InterPro" id="IPR019008">
    <property type="entry name" value="EMC7_beta_sandwich"/>
</dbReference>
<dbReference type="PANTHER" id="PTHR13605">
    <property type="entry name" value="ER MEMBRANE PROTEIN COMPLEX SUBUNIT 7"/>
    <property type="match status" value="1"/>
</dbReference>
<dbReference type="PANTHER" id="PTHR13605:SF4">
    <property type="entry name" value="ER MEMBRANE PROTEIN COMPLEX SUBUNIT 7"/>
    <property type="match status" value="1"/>
</dbReference>
<dbReference type="Pfam" id="PF09430">
    <property type="entry name" value="EMC7_beta-sandw"/>
    <property type="match status" value="1"/>
</dbReference>
<dbReference type="SUPFAM" id="SSF49452">
    <property type="entry name" value="Starch-binding domain-like"/>
    <property type="match status" value="1"/>
</dbReference>
<accession>Q8VY97</accession>
<accession>O49379</accession>
<organism>
    <name type="scientific">Arabidopsis thaliana</name>
    <name type="common">Mouse-ear cress</name>
    <dbReference type="NCBI Taxonomy" id="3702"/>
    <lineage>
        <taxon>Eukaryota</taxon>
        <taxon>Viridiplantae</taxon>
        <taxon>Streptophyta</taxon>
        <taxon>Embryophyta</taxon>
        <taxon>Tracheophyta</taxon>
        <taxon>Spermatophyta</taxon>
        <taxon>Magnoliopsida</taxon>
        <taxon>eudicotyledons</taxon>
        <taxon>Gunneridae</taxon>
        <taxon>Pentapetalae</taxon>
        <taxon>rosids</taxon>
        <taxon>malvids</taxon>
        <taxon>Brassicales</taxon>
        <taxon>Brassicaceae</taxon>
        <taxon>Camelineae</taxon>
        <taxon>Arabidopsis</taxon>
    </lineage>
</organism>
<reference key="1">
    <citation type="journal article" date="1999" name="Nature">
        <title>Sequence and analysis of chromosome 4 of the plant Arabidopsis thaliana.</title>
        <authorList>
            <person name="Mayer K.F.X."/>
            <person name="Schueller C."/>
            <person name="Wambutt R."/>
            <person name="Murphy G."/>
            <person name="Volckaert G."/>
            <person name="Pohl T."/>
            <person name="Duesterhoeft A."/>
            <person name="Stiekema W."/>
            <person name="Entian K.-D."/>
            <person name="Terryn N."/>
            <person name="Harris B."/>
            <person name="Ansorge W."/>
            <person name="Brandt P."/>
            <person name="Grivell L.A."/>
            <person name="Rieger M."/>
            <person name="Weichselgartner M."/>
            <person name="de Simone V."/>
            <person name="Obermaier B."/>
            <person name="Mache R."/>
            <person name="Mueller M."/>
            <person name="Kreis M."/>
            <person name="Delseny M."/>
            <person name="Puigdomenech P."/>
            <person name="Watson M."/>
            <person name="Schmidtheini T."/>
            <person name="Reichert B."/>
            <person name="Portetelle D."/>
            <person name="Perez-Alonso M."/>
            <person name="Boutry M."/>
            <person name="Bancroft I."/>
            <person name="Vos P."/>
            <person name="Hoheisel J."/>
            <person name="Zimmermann W."/>
            <person name="Wedler H."/>
            <person name="Ridley P."/>
            <person name="Langham S.-A."/>
            <person name="McCullagh B."/>
            <person name="Bilham L."/>
            <person name="Robben J."/>
            <person name="van der Schueren J."/>
            <person name="Grymonprez B."/>
            <person name="Chuang Y.-J."/>
            <person name="Vandenbussche F."/>
            <person name="Braeken M."/>
            <person name="Weltjens I."/>
            <person name="Voet M."/>
            <person name="Bastiaens I."/>
            <person name="Aert R."/>
            <person name="Defoor E."/>
            <person name="Weitzenegger T."/>
            <person name="Bothe G."/>
            <person name="Ramsperger U."/>
            <person name="Hilbert H."/>
            <person name="Braun M."/>
            <person name="Holzer E."/>
            <person name="Brandt A."/>
            <person name="Peters S."/>
            <person name="van Staveren M."/>
            <person name="Dirkse W."/>
            <person name="Mooijman P."/>
            <person name="Klein Lankhorst R."/>
            <person name="Rose M."/>
            <person name="Hauf J."/>
            <person name="Koetter P."/>
            <person name="Berneiser S."/>
            <person name="Hempel S."/>
            <person name="Feldpausch M."/>
            <person name="Lamberth S."/>
            <person name="Van den Daele H."/>
            <person name="De Keyser A."/>
            <person name="Buysshaert C."/>
            <person name="Gielen J."/>
            <person name="Villarroel R."/>
            <person name="De Clercq R."/>
            <person name="van Montagu M."/>
            <person name="Rogers J."/>
            <person name="Cronin A."/>
            <person name="Quail M.A."/>
            <person name="Bray-Allen S."/>
            <person name="Clark L."/>
            <person name="Doggett J."/>
            <person name="Hall S."/>
            <person name="Kay M."/>
            <person name="Lennard N."/>
            <person name="McLay K."/>
            <person name="Mayes R."/>
            <person name="Pettett A."/>
            <person name="Rajandream M.A."/>
            <person name="Lyne M."/>
            <person name="Benes V."/>
            <person name="Rechmann S."/>
            <person name="Borkova D."/>
            <person name="Bloecker H."/>
            <person name="Scharfe M."/>
            <person name="Grimm M."/>
            <person name="Loehnert T.-H."/>
            <person name="Dose S."/>
            <person name="de Haan M."/>
            <person name="Maarse A.C."/>
            <person name="Schaefer M."/>
            <person name="Mueller-Auer S."/>
            <person name="Gabel C."/>
            <person name="Fuchs M."/>
            <person name="Fartmann B."/>
            <person name="Granderath K."/>
            <person name="Dauner D."/>
            <person name="Herzl A."/>
            <person name="Neumann S."/>
            <person name="Argiriou A."/>
            <person name="Vitale D."/>
            <person name="Liguori R."/>
            <person name="Piravandi E."/>
            <person name="Massenet O."/>
            <person name="Quigley F."/>
            <person name="Clabauld G."/>
            <person name="Muendlein A."/>
            <person name="Felber R."/>
            <person name="Schnabl S."/>
            <person name="Hiller R."/>
            <person name="Schmidt W."/>
            <person name="Lecharny A."/>
            <person name="Aubourg S."/>
            <person name="Chefdor F."/>
            <person name="Cooke R."/>
            <person name="Berger C."/>
            <person name="Monfort A."/>
            <person name="Casacuberta E."/>
            <person name="Gibbons T."/>
            <person name="Weber N."/>
            <person name="Vandenbol M."/>
            <person name="Bargues M."/>
            <person name="Terol J."/>
            <person name="Torres A."/>
            <person name="Perez-Perez A."/>
            <person name="Purnelle B."/>
            <person name="Bent E."/>
            <person name="Johnson S."/>
            <person name="Tacon D."/>
            <person name="Jesse T."/>
            <person name="Heijnen L."/>
            <person name="Schwarz S."/>
            <person name="Scholler P."/>
            <person name="Heber S."/>
            <person name="Francs P."/>
            <person name="Bielke C."/>
            <person name="Frishman D."/>
            <person name="Haase D."/>
            <person name="Lemcke K."/>
            <person name="Mewes H.-W."/>
            <person name="Stocker S."/>
            <person name="Zaccaria P."/>
            <person name="Bevan M."/>
            <person name="Wilson R.K."/>
            <person name="de la Bastide M."/>
            <person name="Habermann K."/>
            <person name="Parnell L."/>
            <person name="Dedhia N."/>
            <person name="Gnoj L."/>
            <person name="Schutz K."/>
            <person name="Huang E."/>
            <person name="Spiegel L."/>
            <person name="Sekhon M."/>
            <person name="Murray J."/>
            <person name="Sheet P."/>
            <person name="Cordes M."/>
            <person name="Abu-Threideh J."/>
            <person name="Stoneking T."/>
            <person name="Kalicki J."/>
            <person name="Graves T."/>
            <person name="Harmon G."/>
            <person name="Edwards J."/>
            <person name="Latreille P."/>
            <person name="Courtney L."/>
            <person name="Cloud J."/>
            <person name="Abbott A."/>
            <person name="Scott K."/>
            <person name="Johnson D."/>
            <person name="Minx P."/>
            <person name="Bentley D."/>
            <person name="Fulton B."/>
            <person name="Miller N."/>
            <person name="Greco T."/>
            <person name="Kemp K."/>
            <person name="Kramer J."/>
            <person name="Fulton L."/>
            <person name="Mardis E."/>
            <person name="Dante M."/>
            <person name="Pepin K."/>
            <person name="Hillier L.W."/>
            <person name="Nelson J."/>
            <person name="Spieth J."/>
            <person name="Ryan E."/>
            <person name="Andrews S."/>
            <person name="Geisel C."/>
            <person name="Layman D."/>
            <person name="Du H."/>
            <person name="Ali J."/>
            <person name="Berghoff A."/>
            <person name="Jones K."/>
            <person name="Drone K."/>
            <person name="Cotton M."/>
            <person name="Joshu C."/>
            <person name="Antonoiu B."/>
            <person name="Zidanic M."/>
            <person name="Strong C."/>
            <person name="Sun H."/>
            <person name="Lamar B."/>
            <person name="Yordan C."/>
            <person name="Ma P."/>
            <person name="Zhong J."/>
            <person name="Preston R."/>
            <person name="Vil D."/>
            <person name="Shekher M."/>
            <person name="Matero A."/>
            <person name="Shah R."/>
            <person name="Swaby I.K."/>
            <person name="O'Shaughnessy A."/>
            <person name="Rodriguez M."/>
            <person name="Hoffman J."/>
            <person name="Till S."/>
            <person name="Granat S."/>
            <person name="Shohdy N."/>
            <person name="Hasegawa A."/>
            <person name="Hameed A."/>
            <person name="Lodhi M."/>
            <person name="Johnson A."/>
            <person name="Chen E."/>
            <person name="Marra M.A."/>
            <person name="Martienssen R."/>
            <person name="McCombie W.R."/>
        </authorList>
    </citation>
    <scope>NUCLEOTIDE SEQUENCE [LARGE SCALE GENOMIC DNA]</scope>
    <source>
        <strain>cv. Columbia</strain>
    </source>
</reference>
<reference key="2">
    <citation type="journal article" date="2017" name="Plant J.">
        <title>Araport11: a complete reannotation of the Arabidopsis thaliana reference genome.</title>
        <authorList>
            <person name="Cheng C.Y."/>
            <person name="Krishnakumar V."/>
            <person name="Chan A.P."/>
            <person name="Thibaud-Nissen F."/>
            <person name="Schobel S."/>
            <person name="Town C.D."/>
        </authorList>
    </citation>
    <scope>GENOME REANNOTATION</scope>
    <source>
        <strain>cv. Columbia</strain>
    </source>
</reference>
<reference key="3">
    <citation type="journal article" date="2003" name="Science">
        <title>Empirical analysis of transcriptional activity in the Arabidopsis genome.</title>
        <authorList>
            <person name="Yamada K."/>
            <person name="Lim J."/>
            <person name="Dale J.M."/>
            <person name="Chen H."/>
            <person name="Shinn P."/>
            <person name="Palm C.J."/>
            <person name="Southwick A.M."/>
            <person name="Wu H.C."/>
            <person name="Kim C.J."/>
            <person name="Nguyen M."/>
            <person name="Pham P.K."/>
            <person name="Cheuk R.F."/>
            <person name="Karlin-Newmann G."/>
            <person name="Liu S.X."/>
            <person name="Lam B."/>
            <person name="Sakano H."/>
            <person name="Wu T."/>
            <person name="Yu G."/>
            <person name="Miranda M."/>
            <person name="Quach H.L."/>
            <person name="Tripp M."/>
            <person name="Chang C.H."/>
            <person name="Lee J.M."/>
            <person name="Toriumi M.J."/>
            <person name="Chan M.M."/>
            <person name="Tang C.C."/>
            <person name="Onodera C.S."/>
            <person name="Deng J.M."/>
            <person name="Akiyama K."/>
            <person name="Ansari Y."/>
            <person name="Arakawa T."/>
            <person name="Banh J."/>
            <person name="Banno F."/>
            <person name="Bowser L."/>
            <person name="Brooks S.Y."/>
            <person name="Carninci P."/>
            <person name="Chao Q."/>
            <person name="Choy N."/>
            <person name="Enju A."/>
            <person name="Goldsmith A.D."/>
            <person name="Gurjal M."/>
            <person name="Hansen N.F."/>
            <person name="Hayashizaki Y."/>
            <person name="Johnson-Hopson C."/>
            <person name="Hsuan V.W."/>
            <person name="Iida K."/>
            <person name="Karnes M."/>
            <person name="Khan S."/>
            <person name="Koesema E."/>
            <person name="Ishida J."/>
            <person name="Jiang P.X."/>
            <person name="Jones T."/>
            <person name="Kawai J."/>
            <person name="Kamiya A."/>
            <person name="Meyers C."/>
            <person name="Nakajima M."/>
            <person name="Narusaka M."/>
            <person name="Seki M."/>
            <person name="Sakurai T."/>
            <person name="Satou M."/>
            <person name="Tamse R."/>
            <person name="Vaysberg M."/>
            <person name="Wallender E.K."/>
            <person name="Wong C."/>
            <person name="Yamamura Y."/>
            <person name="Yuan S."/>
            <person name="Shinozaki K."/>
            <person name="Davis R.W."/>
            <person name="Theologis A."/>
            <person name="Ecker J.R."/>
        </authorList>
    </citation>
    <scope>NUCLEOTIDE SEQUENCE [LARGE SCALE MRNA]</scope>
    <source>
        <strain>cv. Columbia</strain>
    </source>
</reference>
<sequence length="202" mass="22563">MAPIFRSTSLIAFSLFFFFFASTLPISSGSEDSYTITGRVRVPASTVIGHAAKFSNIKVILNGGQHVTFLRPDGYFTFHKVPAGTHLIEVYALGYFFSPVRVDVSARHRGKVQATLTETRRSLTELVLEPLRAEQYYEMREPFSVMSIVKSPMGLMVGFMVVVVFLMPKLMENIDPEEMKSAQEQMRSQGVPSLTSLLPASR</sequence>
<keyword id="KW-0472">Membrane</keyword>
<keyword id="KW-1185">Reference proteome</keyword>
<keyword id="KW-0732">Signal</keyword>
<keyword id="KW-0812">Transmembrane</keyword>
<keyword id="KW-1133">Transmembrane helix</keyword>
<proteinExistence type="evidence at transcript level"/>
<gene>
    <name type="ordered locus">At4g32130</name>
    <name type="ORF">F10N7.60</name>
</gene>
<protein>
    <recommendedName>
        <fullName>ER membrane protein complex subunit 7 homolog</fullName>
    </recommendedName>
</protein>
<feature type="signal peptide" evidence="1">
    <location>
        <begin position="1"/>
        <end position="23"/>
    </location>
</feature>
<feature type="chain" id="PRO_0000300096" description="ER membrane protein complex subunit 7 homolog">
    <location>
        <begin position="24"/>
        <end position="202"/>
    </location>
</feature>
<feature type="transmembrane region" description="Helical" evidence="1">
    <location>
        <begin position="148"/>
        <end position="168"/>
    </location>
</feature>
<feature type="region of interest" description="Disordered" evidence="2">
    <location>
        <begin position="179"/>
        <end position="202"/>
    </location>
</feature>
<feature type="compositionally biased region" description="Polar residues" evidence="2">
    <location>
        <begin position="182"/>
        <end position="202"/>
    </location>
</feature>
<comment type="subcellular location">
    <subcellularLocation>
        <location evidence="1">Membrane</location>
        <topology evidence="1">Single-pass membrane protein</topology>
    </subcellularLocation>
</comment>
<comment type="similarity">
    <text evidence="3">Belongs to the EMC7 family.</text>
</comment>
<comment type="sequence caution" evidence="3">
    <conflict type="erroneous gene model prediction">
        <sequence resource="EMBL-CDS" id="CAA16576"/>
    </conflict>
</comment>
<comment type="sequence caution" evidence="3">
    <conflict type="erroneous gene model prediction">
        <sequence resource="EMBL-CDS" id="CAB79931"/>
    </conflict>
</comment>